<dbReference type="EMBL" id="CP000462">
    <property type="protein sequence ID" value="ABK37425.1"/>
    <property type="molecule type" value="Genomic_DNA"/>
</dbReference>
<dbReference type="RefSeq" id="WP_011707363.1">
    <property type="nucleotide sequence ID" value="NC_008570.1"/>
</dbReference>
<dbReference type="RefSeq" id="YP_858094.1">
    <property type="nucleotide sequence ID" value="NC_008570.1"/>
</dbReference>
<dbReference type="SMR" id="A0KP93"/>
<dbReference type="STRING" id="380703.AHA_3638"/>
<dbReference type="EnsemblBacteria" id="ABK37425">
    <property type="protein sequence ID" value="ABK37425"/>
    <property type="gene ID" value="AHA_3638"/>
</dbReference>
<dbReference type="GeneID" id="4488574"/>
<dbReference type="KEGG" id="aha:AHA_3638"/>
<dbReference type="PATRIC" id="fig|380703.7.peg.3614"/>
<dbReference type="eggNOG" id="COG0823">
    <property type="taxonomic scope" value="Bacteria"/>
</dbReference>
<dbReference type="HOGENOM" id="CLU_047123_0_0_6"/>
<dbReference type="OrthoDB" id="9802240at2"/>
<dbReference type="Proteomes" id="UP000000756">
    <property type="component" value="Chromosome"/>
</dbReference>
<dbReference type="GO" id="GO:0042597">
    <property type="term" value="C:periplasmic space"/>
    <property type="evidence" value="ECO:0007669"/>
    <property type="project" value="UniProtKB-SubCell"/>
</dbReference>
<dbReference type="GO" id="GO:0051301">
    <property type="term" value="P:cell division"/>
    <property type="evidence" value="ECO:0007669"/>
    <property type="project" value="UniProtKB-UniRule"/>
</dbReference>
<dbReference type="GO" id="GO:0017038">
    <property type="term" value="P:protein import"/>
    <property type="evidence" value="ECO:0007669"/>
    <property type="project" value="InterPro"/>
</dbReference>
<dbReference type="Gene3D" id="2.120.10.30">
    <property type="entry name" value="TolB, C-terminal domain"/>
    <property type="match status" value="1"/>
</dbReference>
<dbReference type="Gene3D" id="3.40.50.10070">
    <property type="entry name" value="TolB, N-terminal domain"/>
    <property type="match status" value="1"/>
</dbReference>
<dbReference type="HAMAP" id="MF_00671">
    <property type="entry name" value="TolB"/>
    <property type="match status" value="1"/>
</dbReference>
<dbReference type="InterPro" id="IPR011042">
    <property type="entry name" value="6-blade_b-propeller_TolB-like"/>
</dbReference>
<dbReference type="InterPro" id="IPR011659">
    <property type="entry name" value="PD40"/>
</dbReference>
<dbReference type="InterPro" id="IPR014167">
    <property type="entry name" value="Tol-Pal_TolB"/>
</dbReference>
<dbReference type="InterPro" id="IPR007195">
    <property type="entry name" value="TolB_N"/>
</dbReference>
<dbReference type="NCBIfam" id="TIGR02800">
    <property type="entry name" value="propeller_TolB"/>
    <property type="match status" value="1"/>
</dbReference>
<dbReference type="PANTHER" id="PTHR36842:SF1">
    <property type="entry name" value="PROTEIN TOLB"/>
    <property type="match status" value="1"/>
</dbReference>
<dbReference type="PANTHER" id="PTHR36842">
    <property type="entry name" value="PROTEIN TOLB HOMOLOG"/>
    <property type="match status" value="1"/>
</dbReference>
<dbReference type="Pfam" id="PF07676">
    <property type="entry name" value="PD40"/>
    <property type="match status" value="4"/>
</dbReference>
<dbReference type="Pfam" id="PF04052">
    <property type="entry name" value="TolB_N"/>
    <property type="match status" value="1"/>
</dbReference>
<dbReference type="SUPFAM" id="SSF52964">
    <property type="entry name" value="TolB, N-terminal domain"/>
    <property type="match status" value="1"/>
</dbReference>
<dbReference type="SUPFAM" id="SSF69304">
    <property type="entry name" value="Tricorn protease N-terminal domain"/>
    <property type="match status" value="1"/>
</dbReference>
<gene>
    <name evidence="1" type="primary">tolB</name>
    <name type="ordered locus">AHA_3638</name>
</gene>
<comment type="function">
    <text evidence="1">Part of the Tol-Pal system, which plays a role in outer membrane invagination during cell division and is important for maintaining outer membrane integrity.</text>
</comment>
<comment type="subunit">
    <text evidence="1">The Tol-Pal system is composed of five core proteins: the inner membrane proteins TolA, TolQ and TolR, the periplasmic protein TolB and the outer membrane protein Pal. They form a network linking the inner and outer membranes and the peptidoglycan layer.</text>
</comment>
<comment type="subcellular location">
    <subcellularLocation>
        <location evidence="1">Periplasm</location>
    </subcellularLocation>
</comment>
<comment type="similarity">
    <text evidence="1">Belongs to the TolB family.</text>
</comment>
<organism>
    <name type="scientific">Aeromonas hydrophila subsp. hydrophila (strain ATCC 7966 / DSM 30187 / BCRC 13018 / CCUG 14551 / JCM 1027 / KCTC 2358 / NCIMB 9240 / NCTC 8049)</name>
    <dbReference type="NCBI Taxonomy" id="380703"/>
    <lineage>
        <taxon>Bacteria</taxon>
        <taxon>Pseudomonadati</taxon>
        <taxon>Pseudomonadota</taxon>
        <taxon>Gammaproteobacteria</taxon>
        <taxon>Aeromonadales</taxon>
        <taxon>Aeromonadaceae</taxon>
        <taxon>Aeromonas</taxon>
    </lineage>
</organism>
<protein>
    <recommendedName>
        <fullName evidence="1">Tol-Pal system protein TolB</fullName>
    </recommendedName>
</protein>
<keyword id="KW-0131">Cell cycle</keyword>
<keyword id="KW-0132">Cell division</keyword>
<keyword id="KW-0574">Periplasm</keyword>
<keyword id="KW-1185">Reference proteome</keyword>
<keyword id="KW-0732">Signal</keyword>
<name>TOLB_AERHH</name>
<accession>A0KP93</accession>
<evidence type="ECO:0000255" key="1">
    <source>
        <dbReference type="HAMAP-Rule" id="MF_00671"/>
    </source>
</evidence>
<sequence length="441" mass="48207">MIRKVFFALVGCLLLGQSAQAALDIVITGGIDSARPIAVAPFKWEGNGQLPQDIAEVVSNDLMRSGKFKPLARGQMPQTPSTSGEINFAPWASQGVEAVVVGSIAAVGDGTYKINFELVDVLKGQLAKAQGGESNGYILDSRMATIPGAQMRQFAHRISDIVYERLTGERGAFLTRLAYVSVQQGTQFPYQLRIADYDGYNEKTLLRSREPLMSPAWSPDGSKLAYVSFENQKSEIYVQDIYTQQRSLITSFRGINGAPEWSPDGRRLAIVLSKDGSPNLYVVDVASKQLTRVTTSRVIDTEPSWMPDGQNLLFTSERGGKPQIYSVNLATGMTRRMTWEGESNQGASITPDGKIMVMVTRVQGQYRIARQDMENNALLVLTQSALDESPSVAPNGSMIIYATIYQGRKSLALVSTDGRFKAVLPTSSGEIRAPAWSPFLN</sequence>
<feature type="signal peptide" evidence="1">
    <location>
        <begin position="1"/>
        <end position="21"/>
    </location>
</feature>
<feature type="chain" id="PRO_1000061934" description="Tol-Pal system protein TolB" evidence="1">
    <location>
        <begin position="22"/>
        <end position="441"/>
    </location>
</feature>
<reference key="1">
    <citation type="journal article" date="2006" name="J. Bacteriol.">
        <title>Genome sequence of Aeromonas hydrophila ATCC 7966T: jack of all trades.</title>
        <authorList>
            <person name="Seshadri R."/>
            <person name="Joseph S.W."/>
            <person name="Chopra A.K."/>
            <person name="Sha J."/>
            <person name="Shaw J."/>
            <person name="Graf J."/>
            <person name="Haft D.H."/>
            <person name="Wu M."/>
            <person name="Ren Q."/>
            <person name="Rosovitz M.J."/>
            <person name="Madupu R."/>
            <person name="Tallon L."/>
            <person name="Kim M."/>
            <person name="Jin S."/>
            <person name="Vuong H."/>
            <person name="Stine O.C."/>
            <person name="Ali A."/>
            <person name="Horneman A.J."/>
            <person name="Heidelberg J.F."/>
        </authorList>
    </citation>
    <scope>NUCLEOTIDE SEQUENCE [LARGE SCALE GENOMIC DNA]</scope>
    <source>
        <strain>ATCC 7966 / DSM 30187 / BCRC 13018 / CCUG 14551 / JCM 1027 / KCTC 2358 / NCIMB 9240 / NCTC 8049</strain>
    </source>
</reference>
<proteinExistence type="inferred from homology"/>